<evidence type="ECO:0000250" key="1"/>
<evidence type="ECO:0000255" key="2">
    <source>
        <dbReference type="PROSITE-ProRule" id="PRU00159"/>
    </source>
</evidence>
<evidence type="ECO:0000256" key="3">
    <source>
        <dbReference type="SAM" id="MobiDB-lite"/>
    </source>
</evidence>
<evidence type="ECO:0000269" key="4">
    <source>
    </source>
</evidence>
<evidence type="ECO:0000269" key="5">
    <source>
    </source>
</evidence>
<evidence type="ECO:0000269" key="6">
    <source>
    </source>
</evidence>
<evidence type="ECO:0000269" key="7">
    <source>
    </source>
</evidence>
<feature type="chain" id="PRO_0000171224" description="Serine/threonine-protein kinase PknK">
    <location>
        <begin position="1"/>
        <end position="1110"/>
    </location>
</feature>
<feature type="domain" description="Protein kinase" evidence="2">
    <location>
        <begin position="26"/>
        <end position="283"/>
    </location>
</feature>
<feature type="region of interest" description="Disordered" evidence="3">
    <location>
        <begin position="308"/>
        <end position="343"/>
    </location>
</feature>
<feature type="active site" description="Proton acceptor" evidence="2">
    <location>
        <position position="149"/>
    </location>
</feature>
<feature type="binding site" evidence="2">
    <location>
        <begin position="32"/>
        <end position="40"/>
    </location>
    <ligand>
        <name>ATP</name>
        <dbReference type="ChEBI" id="CHEBI:30616"/>
    </ligand>
</feature>
<feature type="binding site" evidence="2">
    <location>
        <position position="55"/>
    </location>
    <ligand>
        <name>ATP</name>
        <dbReference type="ChEBI" id="CHEBI:30616"/>
    </ligand>
</feature>
<feature type="binding site" evidence="1">
    <location>
        <position position="154"/>
    </location>
    <ligand>
        <name>Mg(2+)</name>
        <dbReference type="ChEBI" id="CHEBI:18420"/>
    </ligand>
</feature>
<feature type="binding site" evidence="1">
    <location>
        <position position="167"/>
    </location>
    <ligand>
        <name>Mg(2+)</name>
        <dbReference type="ChEBI" id="CHEBI:18420"/>
    </ligand>
</feature>
<feature type="modified residue" description="Phosphothreonine; by autocatalysis" evidence="4">
    <location>
        <position position="179"/>
    </location>
</feature>
<feature type="modified residue" description="Phosphothreonine; by autocatalysis" evidence="4">
    <location>
        <position position="181"/>
    </location>
</feature>
<feature type="mutagenesis site" description="Loss of activity." evidence="4">
    <original>K</original>
    <variation>M</variation>
    <location>
        <position position="55"/>
    </location>
</feature>
<feature type="mutagenesis site" description="Loss of activity; when associated with A-181." evidence="4">
    <original>T</original>
    <variation>A</variation>
    <location>
        <position position="179"/>
    </location>
</feature>
<feature type="mutagenesis site" description="Loss of activity; when associated with A-179." evidence="4">
    <original>T</original>
    <variation>A</variation>
    <location>
        <position position="181"/>
    </location>
</feature>
<name>PKNK_MYCTU</name>
<comment type="function">
    <text evidence="4 5 6 7">Key microbial factor involved in regulation of early and late events in tuberculosis infection, and in host-pathogen interactions. Modulates host immunity during early infection. Slows mycobacterial growth during chronic infection in host and during a variety of stress conditions in vitro. Regulates the expression of a large subset of tRNA genes as a means to facilitate adaptation to changing growth environments. In vitro, directs the inhibition of transcription and translation processes in a phosphorylation-dependent manner. Phosphorylates the transcriptional regulator VirS, thereby increasing the affinity of VirS for the mycobacterial monooxygenase (mymA) promoter. In vitro, can also phosphorylate the mycobacterial monooxygenase operon products Rv3083 (MymA), Rv3084 (LipR), Rv3085 and Rv3088.</text>
</comment>
<comment type="catalytic activity">
    <reaction evidence="4">
        <text>L-seryl-[protein] + ATP = O-phospho-L-seryl-[protein] + ADP + H(+)</text>
        <dbReference type="Rhea" id="RHEA:17989"/>
        <dbReference type="Rhea" id="RHEA-COMP:9863"/>
        <dbReference type="Rhea" id="RHEA-COMP:11604"/>
        <dbReference type="ChEBI" id="CHEBI:15378"/>
        <dbReference type="ChEBI" id="CHEBI:29999"/>
        <dbReference type="ChEBI" id="CHEBI:30616"/>
        <dbReference type="ChEBI" id="CHEBI:83421"/>
        <dbReference type="ChEBI" id="CHEBI:456216"/>
        <dbReference type="EC" id="2.7.11.1"/>
    </reaction>
</comment>
<comment type="catalytic activity">
    <reaction evidence="4">
        <text>L-threonyl-[protein] + ATP = O-phospho-L-threonyl-[protein] + ADP + H(+)</text>
        <dbReference type="Rhea" id="RHEA:46608"/>
        <dbReference type="Rhea" id="RHEA-COMP:11060"/>
        <dbReference type="Rhea" id="RHEA-COMP:11605"/>
        <dbReference type="ChEBI" id="CHEBI:15378"/>
        <dbReference type="ChEBI" id="CHEBI:30013"/>
        <dbReference type="ChEBI" id="CHEBI:30616"/>
        <dbReference type="ChEBI" id="CHEBI:61977"/>
        <dbReference type="ChEBI" id="CHEBI:456216"/>
        <dbReference type="EC" id="2.7.11.1"/>
    </reaction>
</comment>
<comment type="subunit">
    <text evidence="6">Forms oligomeric complexes in solution.</text>
</comment>
<comment type="interaction">
    <interactant intactId="EBI-6418825">
        <id>P9WI65</id>
    </interactant>
    <interactant intactId="EBI-6418825">
        <id>P9WI65</id>
        <label>pknK</label>
    </interactant>
    <organismsDiffer>false</organismsDiffer>
    <experiments>2</experiments>
</comment>
<comment type="subcellular location">
    <subcellularLocation>
        <location>Cytoplasm</location>
    </subcellularLocation>
    <subcellularLocation>
        <location>Cell membrane</location>
    </subcellularLocation>
    <subcellularLocation>
        <location>Secreted</location>
        <location>Cell wall</location>
    </subcellularLocation>
    <text>Probably attached to the cell membrane through interactions mediated by its C-terminal region. May be secreted during infection.</text>
</comment>
<comment type="induction">
    <text evidence="5 7">Induced during early infection in human macrophages.</text>
</comment>
<comment type="domain">
    <text evidence="6">The C-terminal region exerts intrasteric control that autoregulates kinase activity.</text>
</comment>
<comment type="PTM">
    <text evidence="4">Can autophosphorylate the carboxyl terminal region in addition to Thr-179 and Thr-181.</text>
</comment>
<comment type="disruption phenotype">
    <text evidence="5">Deletion affects cell size and cell wall composition, increases survival during persistent infection in mice, and increases resistance to acidic pH, hypoxia, oxidative and stationary-phase stresses in vitro.</text>
</comment>
<comment type="similarity">
    <text evidence="2">Belongs to the protein kinase superfamily. Ser/Thr protein kinase family.</text>
</comment>
<reference key="1">
    <citation type="journal article" date="1998" name="Nature">
        <title>Deciphering the biology of Mycobacterium tuberculosis from the complete genome sequence.</title>
        <authorList>
            <person name="Cole S.T."/>
            <person name="Brosch R."/>
            <person name="Parkhill J."/>
            <person name="Garnier T."/>
            <person name="Churcher C.M."/>
            <person name="Harris D.E."/>
            <person name="Gordon S.V."/>
            <person name="Eiglmeier K."/>
            <person name="Gas S."/>
            <person name="Barry C.E. III"/>
            <person name="Tekaia F."/>
            <person name="Badcock K."/>
            <person name="Basham D."/>
            <person name="Brown D."/>
            <person name="Chillingworth T."/>
            <person name="Connor R."/>
            <person name="Davies R.M."/>
            <person name="Devlin K."/>
            <person name="Feltwell T."/>
            <person name="Gentles S."/>
            <person name="Hamlin N."/>
            <person name="Holroyd S."/>
            <person name="Hornsby T."/>
            <person name="Jagels K."/>
            <person name="Krogh A."/>
            <person name="McLean J."/>
            <person name="Moule S."/>
            <person name="Murphy L.D."/>
            <person name="Oliver S."/>
            <person name="Osborne J."/>
            <person name="Quail M.A."/>
            <person name="Rajandream M.A."/>
            <person name="Rogers J."/>
            <person name="Rutter S."/>
            <person name="Seeger K."/>
            <person name="Skelton S."/>
            <person name="Squares S."/>
            <person name="Squares R."/>
            <person name="Sulston J.E."/>
            <person name="Taylor K."/>
            <person name="Whitehead S."/>
            <person name="Barrell B.G."/>
        </authorList>
    </citation>
    <scope>NUCLEOTIDE SEQUENCE [LARGE SCALE GENOMIC DNA]</scope>
    <source>
        <strain>ATCC 25618 / H37Rv</strain>
    </source>
</reference>
<reference key="2">
    <citation type="journal article" date="2009" name="J. Biol. Chem.">
        <title>The Mycobacterium tuberculosis protein kinase K modulates activation of transcription from the promoter of mycobacterial monooxygenase operon through phosphorylation of the transcriptional regulator VirS.</title>
        <authorList>
            <person name="Kumar P."/>
            <person name="Kumar D."/>
            <person name="Parikh A."/>
            <person name="Rananaware D."/>
            <person name="Gupta M."/>
            <person name="Singh Y."/>
            <person name="Nandicoori V.K."/>
        </authorList>
    </citation>
    <scope>FUNCTION</scope>
    <scope>CATALYTIC ACTIVITY</scope>
    <scope>SUBCELLULAR LOCATION</scope>
    <scope>PHOSPHORYLATION AT THR-179 AND THR-181</scope>
    <scope>MUTAGENESIS OF LYS-55; THR-179 AND THR-181</scope>
    <source>
        <strain>ATCC 25618 / H37Rv</strain>
    </source>
</reference>
<reference key="3">
    <citation type="journal article" date="2010" name="Microbiology">
        <title>Mycobacterium tuberculosis protein kinase K confers survival advantage during early infection in mice and regulates growth in culture and during persistent infection: implications for immune modulation.</title>
        <authorList>
            <person name="Malhotra V."/>
            <person name="Arteaga-Cortes L.T."/>
            <person name="Clay G."/>
            <person name="Clark-Curtiss J.E."/>
        </authorList>
    </citation>
    <scope>FUNCTION</scope>
    <scope>SUBCELLULAR LOCATION</scope>
    <scope>INDUCTION</scope>
    <scope>DISRUPTION PHENOTYPE</scope>
    <source>
        <strain>ATCC 25618 / H37Rv</strain>
    </source>
</reference>
<reference key="4">
    <citation type="journal article" date="2011" name="Mol. Cell. Proteomics">
        <title>Proteogenomic analysis of Mycobacterium tuberculosis by high resolution mass spectrometry.</title>
        <authorList>
            <person name="Kelkar D.S."/>
            <person name="Kumar D."/>
            <person name="Kumar P."/>
            <person name="Balakrishnan L."/>
            <person name="Muthusamy B."/>
            <person name="Yadav A.K."/>
            <person name="Shrivastava P."/>
            <person name="Marimuthu A."/>
            <person name="Anand S."/>
            <person name="Sundaram H."/>
            <person name="Kingsbury R."/>
            <person name="Harsha H.C."/>
            <person name="Nair B."/>
            <person name="Prasad T.S."/>
            <person name="Chauhan D.S."/>
            <person name="Katoch K."/>
            <person name="Katoch V.M."/>
            <person name="Kumar P."/>
            <person name="Chaerkady R."/>
            <person name="Ramachandran S."/>
            <person name="Dash D."/>
            <person name="Pandey A."/>
        </authorList>
    </citation>
    <scope>IDENTIFICATION BY MASS SPECTROMETRY [LARGE SCALE ANALYSIS]</scope>
    <source>
        <strain>ATCC 25618 / H37Rv</strain>
    </source>
</reference>
<reference key="5">
    <citation type="journal article" date="2012" name="J. Bacteriol.">
        <title>Mycobacterium tuberculosis protein kinase K enables growth adaptation through translation control.</title>
        <authorList>
            <person name="Malhotra V."/>
            <person name="Okon B.P."/>
            <person name="Clark-Curtiss J.E."/>
        </authorList>
    </citation>
    <scope>FUNCTION</scope>
    <scope>SUBUNIT</scope>
    <scope>DOMAIN</scope>
    <source>
        <strain>ATCC 25618 / H37Rv</strain>
    </source>
</reference>
<reference key="6">
    <citation type="journal article" date="2012" name="Mol. Cell. Biochem.">
        <title>Functional characterization delineates that a Mycobacterium tuberculosis specific protein kinase (Rv3080c) is responsible for the growth, phagocytosis and intracellular survival of avirulent mycobacteria.</title>
        <authorList>
            <person name="Kumari R."/>
            <person name="Singh S.K."/>
            <person name="Singh D.K."/>
            <person name="Singh P.K."/>
            <person name="Chaurasiya S.K."/>
            <person name="Srivastava K.K."/>
        </authorList>
    </citation>
    <scope>FUNCTION</scope>
    <scope>INDUCTION</scope>
</reference>
<proteinExistence type="evidence at protein level"/>
<dbReference type="EC" id="2.7.11.1"/>
<dbReference type="EMBL" id="AL123456">
    <property type="protein sequence ID" value="CCP45889.1"/>
    <property type="molecule type" value="Genomic_DNA"/>
</dbReference>
<dbReference type="PIR" id="A70652">
    <property type="entry name" value="A70652"/>
</dbReference>
<dbReference type="RefSeq" id="NP_217596.1">
    <property type="nucleotide sequence ID" value="NC_000962.3"/>
</dbReference>
<dbReference type="RefSeq" id="WP_003899905.1">
    <property type="nucleotide sequence ID" value="NZ_NVQJ01000011.1"/>
</dbReference>
<dbReference type="SMR" id="P9WI65"/>
<dbReference type="STRING" id="83332.Rv3080c"/>
<dbReference type="iPTMnet" id="P9WI65"/>
<dbReference type="PaxDb" id="83332-Rv3080c"/>
<dbReference type="GeneID" id="888659"/>
<dbReference type="KEGG" id="mtu:Rv3080c"/>
<dbReference type="KEGG" id="mtv:RVBD_3080c"/>
<dbReference type="TubercuList" id="Rv3080c"/>
<dbReference type="eggNOG" id="COG0515">
    <property type="taxonomic scope" value="Bacteria"/>
</dbReference>
<dbReference type="eggNOG" id="COG2909">
    <property type="taxonomic scope" value="Bacteria"/>
</dbReference>
<dbReference type="InParanoid" id="P9WI65"/>
<dbReference type="OrthoDB" id="136365at2"/>
<dbReference type="Proteomes" id="UP000001584">
    <property type="component" value="Chromosome"/>
</dbReference>
<dbReference type="GO" id="GO:0005829">
    <property type="term" value="C:cytosol"/>
    <property type="evidence" value="ECO:0007005"/>
    <property type="project" value="MTBBASE"/>
</dbReference>
<dbReference type="GO" id="GO:0005576">
    <property type="term" value="C:extracellular region"/>
    <property type="evidence" value="ECO:0007669"/>
    <property type="project" value="UniProtKB-KW"/>
</dbReference>
<dbReference type="GO" id="GO:0009274">
    <property type="term" value="C:peptidoglycan-based cell wall"/>
    <property type="evidence" value="ECO:0007005"/>
    <property type="project" value="MTBBASE"/>
</dbReference>
<dbReference type="GO" id="GO:0005886">
    <property type="term" value="C:plasma membrane"/>
    <property type="evidence" value="ECO:0000314"/>
    <property type="project" value="MTBBASE"/>
</dbReference>
<dbReference type="GO" id="GO:0005524">
    <property type="term" value="F:ATP binding"/>
    <property type="evidence" value="ECO:0007669"/>
    <property type="project" value="UniProtKB-KW"/>
</dbReference>
<dbReference type="GO" id="GO:0042802">
    <property type="term" value="F:identical protein binding"/>
    <property type="evidence" value="ECO:0000353"/>
    <property type="project" value="IntAct"/>
</dbReference>
<dbReference type="GO" id="GO:0046872">
    <property type="term" value="F:metal ion binding"/>
    <property type="evidence" value="ECO:0007669"/>
    <property type="project" value="UniProtKB-KW"/>
</dbReference>
<dbReference type="GO" id="GO:0004672">
    <property type="term" value="F:protein kinase activity"/>
    <property type="evidence" value="ECO:0000314"/>
    <property type="project" value="MTBBASE"/>
</dbReference>
<dbReference type="GO" id="GO:0106310">
    <property type="term" value="F:protein serine kinase activity"/>
    <property type="evidence" value="ECO:0007669"/>
    <property type="project" value="RHEA"/>
</dbReference>
<dbReference type="GO" id="GO:0004674">
    <property type="term" value="F:protein serine/threonine kinase activity"/>
    <property type="evidence" value="ECO:0000314"/>
    <property type="project" value="MTBBASE"/>
</dbReference>
<dbReference type="GO" id="GO:1903338">
    <property type="term" value="P:regulation of cell wall organization or biogenesis"/>
    <property type="evidence" value="ECO:0000314"/>
    <property type="project" value="UniProtKB"/>
</dbReference>
<dbReference type="GO" id="GO:0006355">
    <property type="term" value="P:regulation of DNA-templated transcription"/>
    <property type="evidence" value="ECO:0000314"/>
    <property type="project" value="UniProtKB"/>
</dbReference>
<dbReference type="CDD" id="cd14014">
    <property type="entry name" value="STKc_PknB_like"/>
    <property type="match status" value="1"/>
</dbReference>
<dbReference type="FunFam" id="3.40.50.300:FF:002867">
    <property type="entry name" value="Serine/threonine-protein kinase PknK"/>
    <property type="match status" value="1"/>
</dbReference>
<dbReference type="Gene3D" id="3.40.50.300">
    <property type="entry name" value="P-loop containing nucleotide triphosphate hydrolases"/>
    <property type="match status" value="1"/>
</dbReference>
<dbReference type="Gene3D" id="3.30.200.20">
    <property type="entry name" value="Phosphorylase Kinase, domain 1"/>
    <property type="match status" value="1"/>
</dbReference>
<dbReference type="Gene3D" id="1.10.510.10">
    <property type="entry name" value="Transferase(Phosphotransferase) domain 1"/>
    <property type="match status" value="1"/>
</dbReference>
<dbReference type="InterPro" id="IPR041664">
    <property type="entry name" value="AAA_16"/>
</dbReference>
<dbReference type="InterPro" id="IPR011009">
    <property type="entry name" value="Kinase-like_dom_sf"/>
</dbReference>
<dbReference type="InterPro" id="IPR027417">
    <property type="entry name" value="P-loop_NTPase"/>
</dbReference>
<dbReference type="InterPro" id="IPR000719">
    <property type="entry name" value="Prot_kinase_dom"/>
</dbReference>
<dbReference type="InterPro" id="IPR017441">
    <property type="entry name" value="Protein_kinase_ATP_BS"/>
</dbReference>
<dbReference type="InterPro" id="IPR016236">
    <property type="entry name" value="Ser/Thr_kinase_PknK_prd"/>
</dbReference>
<dbReference type="PANTHER" id="PTHR43289">
    <property type="entry name" value="MITOGEN-ACTIVATED PROTEIN KINASE KINASE KINASE 20-RELATED"/>
    <property type="match status" value="1"/>
</dbReference>
<dbReference type="PANTHER" id="PTHR43289:SF6">
    <property type="entry name" value="SERINE_THREONINE-PROTEIN KINASE NEKL-3"/>
    <property type="match status" value="1"/>
</dbReference>
<dbReference type="Pfam" id="PF13191">
    <property type="entry name" value="AAA_16"/>
    <property type="match status" value="1"/>
</dbReference>
<dbReference type="Pfam" id="PF00069">
    <property type="entry name" value="Pkinase"/>
    <property type="match status" value="1"/>
</dbReference>
<dbReference type="PIRSF" id="PIRSF000574">
    <property type="entry name" value="Ser/Thr_PK_PknK_prd"/>
    <property type="match status" value="1"/>
</dbReference>
<dbReference type="SMART" id="SM00220">
    <property type="entry name" value="S_TKc"/>
    <property type="match status" value="1"/>
</dbReference>
<dbReference type="SUPFAM" id="SSF52540">
    <property type="entry name" value="P-loop containing nucleoside triphosphate hydrolases"/>
    <property type="match status" value="1"/>
</dbReference>
<dbReference type="SUPFAM" id="SSF56112">
    <property type="entry name" value="Protein kinase-like (PK-like)"/>
    <property type="match status" value="1"/>
</dbReference>
<dbReference type="PROSITE" id="PS00107">
    <property type="entry name" value="PROTEIN_KINASE_ATP"/>
    <property type="match status" value="1"/>
</dbReference>
<dbReference type="PROSITE" id="PS50011">
    <property type="entry name" value="PROTEIN_KINASE_DOM"/>
    <property type="match status" value="1"/>
</dbReference>
<accession>P9WI65</accession>
<accession>L0TEA2</accession>
<accession>P95078</accession>
<protein>
    <recommendedName>
        <fullName>Serine/threonine-protein kinase PknK</fullName>
        <ecNumber>2.7.11.1</ecNumber>
    </recommendedName>
    <alternativeName>
        <fullName>Protein kinase K</fullName>
    </alternativeName>
</protein>
<organism>
    <name type="scientific">Mycobacterium tuberculosis (strain ATCC 25618 / H37Rv)</name>
    <dbReference type="NCBI Taxonomy" id="83332"/>
    <lineage>
        <taxon>Bacteria</taxon>
        <taxon>Bacillati</taxon>
        <taxon>Actinomycetota</taxon>
        <taxon>Actinomycetes</taxon>
        <taxon>Mycobacteriales</taxon>
        <taxon>Mycobacteriaceae</taxon>
        <taxon>Mycobacterium</taxon>
        <taxon>Mycobacterium tuberculosis complex</taxon>
    </lineage>
</organism>
<keyword id="KW-0067">ATP-binding</keyword>
<keyword id="KW-1003">Cell membrane</keyword>
<keyword id="KW-0134">Cell wall</keyword>
<keyword id="KW-0963">Cytoplasm</keyword>
<keyword id="KW-0418">Kinase</keyword>
<keyword id="KW-0460">Magnesium</keyword>
<keyword id="KW-0472">Membrane</keyword>
<keyword id="KW-0479">Metal-binding</keyword>
<keyword id="KW-0547">Nucleotide-binding</keyword>
<keyword id="KW-0597">Phosphoprotein</keyword>
<keyword id="KW-1185">Reference proteome</keyword>
<keyword id="KW-0964">Secreted</keyword>
<keyword id="KW-0723">Serine/threonine-protein kinase</keyword>
<keyword id="KW-0808">Transferase</keyword>
<keyword id="KW-0843">Virulence</keyword>
<sequence>MTDVDPHATRRDLVPNIPAELLEAGFDNVEEIGRGGFGVVYRCVQPSLDRAVAVKVLSTDLDRDNLERFLREQRAMGRLSGHPHIVTVLQVGVLAGGRPFIVMPYHAKNSLETLIRRHGPLDWRETLSIGVKLAGALEAAHRVGTLHRDVKPGNILLTDYGEPQLTDFGIARIAGGFETATGVIAGSPAFTAPEVLEGASPTPASDVYSLGATLFCALTGHAAYERRSGERVIAQFLRITSQPIPDLRKQGLPADVAAAIERAMARHPADRPATAADVGEELRDVQRRNGVSVDEMPLPVELGVERRRSPEAHAAHRHTGGGTPTVPTPPTPATKYRPSVPTGSLVTRSRLTDILRAGGRRRLILIHAPSGFGKSTLAAQWREELSRDGAAVAWLTIDNDDNNEVWFLSHLLESIRRVRPTLAESLGHVLEEHGDDAGRYVLTSLIDEIHENDDRIAVVIDDWHRVSDSRTQAALGFLLDNGCHHLQLIVTSWSRAGLPVGRLRIGDELAEIDSAALRFDTDEAAALLNDAGGLRLPRADVQALTTSTDGWAAALRLAALSLRGGGDATQLLRGLSGASDVIHEFLSENVLDTLEPELREFLLVASVTERTCGGLASALAGITNGRAMLEEAEHRGLFLQRTEDDPNWFRFHQMFADFLHRRLERGGSHRVAELHRRASAWFAENGYLHEAVDHALAAGDPARAVDLVEQDETNLPEQSKMTTLLAIVQKLPTSMVVSRARLQLAIAWANILLQRPAPATGALNRFETALGRAELPEATQADLRAEADVLRAVAEVFADRVERVDDLLAEAMSRPDTLPPRVPGTAGNTAALAAICRFEFAEVYPLLDWAAPYQEMMGPFGTVYAQCLRGMAARNRLDIVAALQNFRTAFEVGTAVGAHSHAARLAGSLLAELLYETGDLAGAGRLMDESYLLGSEGGAVDYLAARYVIGARVKAAQGDHEGAADRLSTGGDTAVQLGLPRLAARINNERIRLGIALPAAVAADLLAPRTIPRDNGIATMTAELDEDSAVRLLSAGDSADRDQACQRAGALAAAIDGTRRPLAALQAQILHIETLAATGRESDARNELAPVATKCAELGLSRLLVDAGLA</sequence>
<gene>
    <name type="primary">pknK</name>
    <name type="ordered locus">Rv3080c</name>
    <name type="ORF">MTCY22D7.01</name>
    <name type="ORF">MTV013.01c</name>
</gene>